<reference key="1">
    <citation type="submission" date="2009-07" db="EMBL/GenBank/DDBJ databases">
        <title>Complete sequence of Geobacter sp. M21.</title>
        <authorList>
            <consortium name="US DOE Joint Genome Institute"/>
            <person name="Lucas S."/>
            <person name="Copeland A."/>
            <person name="Lapidus A."/>
            <person name="Glavina del Rio T."/>
            <person name="Dalin E."/>
            <person name="Tice H."/>
            <person name="Bruce D."/>
            <person name="Goodwin L."/>
            <person name="Pitluck S."/>
            <person name="Saunders E."/>
            <person name="Brettin T."/>
            <person name="Detter J.C."/>
            <person name="Han C."/>
            <person name="Larimer F."/>
            <person name="Land M."/>
            <person name="Hauser L."/>
            <person name="Kyrpides N."/>
            <person name="Ovchinnikova G."/>
            <person name="Lovley D."/>
        </authorList>
    </citation>
    <scope>NUCLEOTIDE SEQUENCE [LARGE SCALE GENOMIC DNA]</scope>
    <source>
        <strain>M21</strain>
    </source>
</reference>
<dbReference type="EC" id="1.2.1.38" evidence="1"/>
<dbReference type="EMBL" id="CP001661">
    <property type="protein sequence ID" value="ACT19372.1"/>
    <property type="molecule type" value="Genomic_DNA"/>
</dbReference>
<dbReference type="SMR" id="C6E4S6"/>
<dbReference type="STRING" id="443144.GM21_3347"/>
<dbReference type="KEGG" id="gem:GM21_3347"/>
<dbReference type="eggNOG" id="COG0002">
    <property type="taxonomic scope" value="Bacteria"/>
</dbReference>
<dbReference type="HOGENOM" id="CLU_006384_0_1_7"/>
<dbReference type="OrthoDB" id="9801289at2"/>
<dbReference type="UniPathway" id="UPA00068">
    <property type="reaction ID" value="UER00108"/>
</dbReference>
<dbReference type="GO" id="GO:0005737">
    <property type="term" value="C:cytoplasm"/>
    <property type="evidence" value="ECO:0007669"/>
    <property type="project" value="UniProtKB-SubCell"/>
</dbReference>
<dbReference type="GO" id="GO:0003942">
    <property type="term" value="F:N-acetyl-gamma-glutamyl-phosphate reductase activity"/>
    <property type="evidence" value="ECO:0007669"/>
    <property type="project" value="UniProtKB-UniRule"/>
</dbReference>
<dbReference type="GO" id="GO:0051287">
    <property type="term" value="F:NAD binding"/>
    <property type="evidence" value="ECO:0007669"/>
    <property type="project" value="InterPro"/>
</dbReference>
<dbReference type="GO" id="GO:0070401">
    <property type="term" value="F:NADP+ binding"/>
    <property type="evidence" value="ECO:0007669"/>
    <property type="project" value="InterPro"/>
</dbReference>
<dbReference type="GO" id="GO:0006526">
    <property type="term" value="P:L-arginine biosynthetic process"/>
    <property type="evidence" value="ECO:0007669"/>
    <property type="project" value="UniProtKB-UniRule"/>
</dbReference>
<dbReference type="CDD" id="cd23934">
    <property type="entry name" value="AGPR_1_C"/>
    <property type="match status" value="1"/>
</dbReference>
<dbReference type="CDD" id="cd17895">
    <property type="entry name" value="AGPR_1_N"/>
    <property type="match status" value="1"/>
</dbReference>
<dbReference type="FunFam" id="3.30.360.10:FF:000014">
    <property type="entry name" value="N-acetyl-gamma-glutamyl-phosphate reductase"/>
    <property type="match status" value="1"/>
</dbReference>
<dbReference type="Gene3D" id="3.30.360.10">
    <property type="entry name" value="Dihydrodipicolinate Reductase, domain 2"/>
    <property type="match status" value="1"/>
</dbReference>
<dbReference type="Gene3D" id="3.40.50.720">
    <property type="entry name" value="NAD(P)-binding Rossmann-like Domain"/>
    <property type="match status" value="1"/>
</dbReference>
<dbReference type="HAMAP" id="MF_00150">
    <property type="entry name" value="ArgC_type1"/>
    <property type="match status" value="1"/>
</dbReference>
<dbReference type="InterPro" id="IPR023013">
    <property type="entry name" value="AGPR_AS"/>
</dbReference>
<dbReference type="InterPro" id="IPR000706">
    <property type="entry name" value="AGPR_type-1"/>
</dbReference>
<dbReference type="InterPro" id="IPR036291">
    <property type="entry name" value="NAD(P)-bd_dom_sf"/>
</dbReference>
<dbReference type="InterPro" id="IPR050085">
    <property type="entry name" value="NAGSA_dehydrogenase"/>
</dbReference>
<dbReference type="InterPro" id="IPR000534">
    <property type="entry name" value="Semialdehyde_DH_NAD-bd"/>
</dbReference>
<dbReference type="NCBIfam" id="TIGR01850">
    <property type="entry name" value="argC"/>
    <property type="match status" value="1"/>
</dbReference>
<dbReference type="PANTHER" id="PTHR32338:SF10">
    <property type="entry name" value="N-ACETYL-GAMMA-GLUTAMYL-PHOSPHATE REDUCTASE, CHLOROPLASTIC-RELATED"/>
    <property type="match status" value="1"/>
</dbReference>
<dbReference type="PANTHER" id="PTHR32338">
    <property type="entry name" value="N-ACETYL-GAMMA-GLUTAMYL-PHOSPHATE REDUCTASE, CHLOROPLASTIC-RELATED-RELATED"/>
    <property type="match status" value="1"/>
</dbReference>
<dbReference type="Pfam" id="PF01118">
    <property type="entry name" value="Semialdhyde_dh"/>
    <property type="match status" value="1"/>
</dbReference>
<dbReference type="Pfam" id="PF22698">
    <property type="entry name" value="Semialdhyde_dhC_1"/>
    <property type="match status" value="1"/>
</dbReference>
<dbReference type="SMART" id="SM00859">
    <property type="entry name" value="Semialdhyde_dh"/>
    <property type="match status" value="1"/>
</dbReference>
<dbReference type="SUPFAM" id="SSF55347">
    <property type="entry name" value="Glyceraldehyde-3-phosphate dehydrogenase-like, C-terminal domain"/>
    <property type="match status" value="1"/>
</dbReference>
<dbReference type="SUPFAM" id="SSF51735">
    <property type="entry name" value="NAD(P)-binding Rossmann-fold domains"/>
    <property type="match status" value="1"/>
</dbReference>
<dbReference type="PROSITE" id="PS01224">
    <property type="entry name" value="ARGC"/>
    <property type="match status" value="1"/>
</dbReference>
<gene>
    <name evidence="1" type="primary">argC</name>
    <name type="ordered locus">GM21_3347</name>
</gene>
<comment type="function">
    <text evidence="1">Catalyzes the NADPH-dependent reduction of N-acetyl-5-glutamyl phosphate to yield N-acetyl-L-glutamate 5-semialdehyde.</text>
</comment>
<comment type="catalytic activity">
    <reaction evidence="1">
        <text>N-acetyl-L-glutamate 5-semialdehyde + phosphate + NADP(+) = N-acetyl-L-glutamyl 5-phosphate + NADPH + H(+)</text>
        <dbReference type="Rhea" id="RHEA:21588"/>
        <dbReference type="ChEBI" id="CHEBI:15378"/>
        <dbReference type="ChEBI" id="CHEBI:29123"/>
        <dbReference type="ChEBI" id="CHEBI:43474"/>
        <dbReference type="ChEBI" id="CHEBI:57783"/>
        <dbReference type="ChEBI" id="CHEBI:57936"/>
        <dbReference type="ChEBI" id="CHEBI:58349"/>
        <dbReference type="EC" id="1.2.1.38"/>
    </reaction>
</comment>
<comment type="pathway">
    <text evidence="1">Amino-acid biosynthesis; L-arginine biosynthesis; N(2)-acetyl-L-ornithine from L-glutamate: step 3/4.</text>
</comment>
<comment type="subcellular location">
    <subcellularLocation>
        <location evidence="1">Cytoplasm</location>
    </subcellularLocation>
</comment>
<comment type="similarity">
    <text evidence="1">Belongs to the NAGSA dehydrogenase family. Type 1 subfamily.</text>
</comment>
<accession>C6E4S6</accession>
<sequence length="346" mass="36977">MLKVAIVGASGYTGVELLRILHSHPEVAVTCVTSEQSAGRPVSSVFPSLRGRCDIVLENLEPVGIAEKVDIVFTALPHKAAMEVVPTFMKMGKDVIDLSADYRIHDADTYGKWYEPHLNPELLPEAVYGIPELRRAEIAEASLIANPGCYPTSVILGLAPLLKGKVIDPRSIIVDAASGTSGAGRGAKVDNLYCEVNEGFRAYGVGGVHRHIPEIEQELSLLAGSPLNITFTPHLVPMDRGILSTIYSQTAGSVKAADLIALYEAFYDGEPFVRVLPEGVLPSTAHVRGSNFCDIGITVDQRTGRVIVISAIDNLVKGASGQAVQNMNLMCGLPETLGLDLLPVFP</sequence>
<organism>
    <name type="scientific">Geobacter sp. (strain M21)</name>
    <dbReference type="NCBI Taxonomy" id="443144"/>
    <lineage>
        <taxon>Bacteria</taxon>
        <taxon>Pseudomonadati</taxon>
        <taxon>Thermodesulfobacteriota</taxon>
        <taxon>Desulfuromonadia</taxon>
        <taxon>Geobacterales</taxon>
        <taxon>Geobacteraceae</taxon>
        <taxon>Geobacter</taxon>
    </lineage>
</organism>
<proteinExistence type="inferred from homology"/>
<feature type="chain" id="PRO_1000203404" description="N-acetyl-gamma-glutamyl-phosphate reductase">
    <location>
        <begin position="1"/>
        <end position="346"/>
    </location>
</feature>
<feature type="active site" evidence="1">
    <location>
        <position position="149"/>
    </location>
</feature>
<protein>
    <recommendedName>
        <fullName evidence="1">N-acetyl-gamma-glutamyl-phosphate reductase</fullName>
        <shortName evidence="1">AGPR</shortName>
        <ecNumber evidence="1">1.2.1.38</ecNumber>
    </recommendedName>
    <alternativeName>
        <fullName evidence="1">N-acetyl-glutamate semialdehyde dehydrogenase</fullName>
        <shortName evidence="1">NAGSA dehydrogenase</shortName>
    </alternativeName>
</protein>
<evidence type="ECO:0000255" key="1">
    <source>
        <dbReference type="HAMAP-Rule" id="MF_00150"/>
    </source>
</evidence>
<name>ARGC_GEOSM</name>
<keyword id="KW-0028">Amino-acid biosynthesis</keyword>
<keyword id="KW-0055">Arginine biosynthesis</keyword>
<keyword id="KW-0963">Cytoplasm</keyword>
<keyword id="KW-0521">NADP</keyword>
<keyword id="KW-0560">Oxidoreductase</keyword>